<organism>
    <name type="scientific">Salmonella typhi</name>
    <dbReference type="NCBI Taxonomy" id="90370"/>
    <lineage>
        <taxon>Bacteria</taxon>
        <taxon>Pseudomonadati</taxon>
        <taxon>Pseudomonadota</taxon>
        <taxon>Gammaproteobacteria</taxon>
        <taxon>Enterobacterales</taxon>
        <taxon>Enterobacteriaceae</taxon>
        <taxon>Salmonella</taxon>
    </lineage>
</organism>
<protein>
    <recommendedName>
        <fullName evidence="1">Large ribosomal subunit protein bL34</fullName>
    </recommendedName>
    <alternativeName>
        <fullName>50S ribosomal protein L34</fullName>
    </alternativeName>
</protein>
<sequence length="46" mass="5380">MKRTFQPSVLKRNRSHGFRARMATKNGRQVLARRRAKGRARLTVSK</sequence>
<keyword id="KW-0687">Ribonucleoprotein</keyword>
<keyword id="KW-0689">Ribosomal protein</keyword>
<name>RL34_SALTI</name>
<comment type="similarity">
    <text evidence="1">Belongs to the bacterial ribosomal protein bL34 family.</text>
</comment>
<feature type="chain" id="PRO_0000187455" description="Large ribosomal subunit protein bL34">
    <location>
        <begin position="1"/>
        <end position="46"/>
    </location>
</feature>
<accession>P0A7P9</accession>
<accession>P02437</accession>
<proteinExistence type="inferred from homology"/>
<evidence type="ECO:0000305" key="1"/>
<dbReference type="EMBL" id="AL513382">
    <property type="protein sequence ID" value="CAD03156.1"/>
    <property type="molecule type" value="Genomic_DNA"/>
</dbReference>
<dbReference type="EMBL" id="AE014613">
    <property type="protein sequence ID" value="AAO71176.1"/>
    <property type="molecule type" value="Genomic_DNA"/>
</dbReference>
<dbReference type="RefSeq" id="NP_458103.1">
    <property type="nucleotide sequence ID" value="NC_003198.1"/>
</dbReference>
<dbReference type="RefSeq" id="WP_000831330.1">
    <property type="nucleotide sequence ID" value="NZ_WSUR01000023.1"/>
</dbReference>
<dbReference type="SMR" id="P0A7P9"/>
<dbReference type="STRING" id="220341.gene:17587799"/>
<dbReference type="GeneID" id="98190980"/>
<dbReference type="KEGG" id="stt:t3680"/>
<dbReference type="KEGG" id="sty:STY3939A"/>
<dbReference type="PATRIC" id="fig|220341.7.peg.4021"/>
<dbReference type="eggNOG" id="COG0230">
    <property type="taxonomic scope" value="Bacteria"/>
</dbReference>
<dbReference type="HOGENOM" id="CLU_129938_2_1_6"/>
<dbReference type="OrthoDB" id="9804164at2"/>
<dbReference type="Proteomes" id="UP000000541">
    <property type="component" value="Chromosome"/>
</dbReference>
<dbReference type="Proteomes" id="UP000002670">
    <property type="component" value="Chromosome"/>
</dbReference>
<dbReference type="GO" id="GO:1990904">
    <property type="term" value="C:ribonucleoprotein complex"/>
    <property type="evidence" value="ECO:0007669"/>
    <property type="project" value="UniProtKB-KW"/>
</dbReference>
<dbReference type="GO" id="GO:0005840">
    <property type="term" value="C:ribosome"/>
    <property type="evidence" value="ECO:0007669"/>
    <property type="project" value="UniProtKB-KW"/>
</dbReference>
<dbReference type="GO" id="GO:0003735">
    <property type="term" value="F:structural constituent of ribosome"/>
    <property type="evidence" value="ECO:0007669"/>
    <property type="project" value="InterPro"/>
</dbReference>
<dbReference type="GO" id="GO:0006412">
    <property type="term" value="P:translation"/>
    <property type="evidence" value="ECO:0007669"/>
    <property type="project" value="UniProtKB-UniRule"/>
</dbReference>
<dbReference type="FunFam" id="1.10.287.3980:FF:000001">
    <property type="entry name" value="Mitochondrial ribosomal protein L34"/>
    <property type="match status" value="1"/>
</dbReference>
<dbReference type="Gene3D" id="1.10.287.3980">
    <property type="match status" value="1"/>
</dbReference>
<dbReference type="HAMAP" id="MF_00391">
    <property type="entry name" value="Ribosomal_bL34"/>
    <property type="match status" value="1"/>
</dbReference>
<dbReference type="InterPro" id="IPR000271">
    <property type="entry name" value="Ribosomal_bL34"/>
</dbReference>
<dbReference type="InterPro" id="IPR020939">
    <property type="entry name" value="Ribosomal_bL34_CS"/>
</dbReference>
<dbReference type="NCBIfam" id="TIGR01030">
    <property type="entry name" value="rpmH_bact"/>
    <property type="match status" value="1"/>
</dbReference>
<dbReference type="PANTHER" id="PTHR14503:SF4">
    <property type="entry name" value="LARGE RIBOSOMAL SUBUNIT PROTEIN BL34M"/>
    <property type="match status" value="1"/>
</dbReference>
<dbReference type="PANTHER" id="PTHR14503">
    <property type="entry name" value="MITOCHONDRIAL RIBOSOMAL PROTEIN 34 FAMILY MEMBER"/>
    <property type="match status" value="1"/>
</dbReference>
<dbReference type="Pfam" id="PF00468">
    <property type="entry name" value="Ribosomal_L34"/>
    <property type="match status" value="1"/>
</dbReference>
<dbReference type="PROSITE" id="PS00784">
    <property type="entry name" value="RIBOSOMAL_L34"/>
    <property type="match status" value="1"/>
</dbReference>
<reference key="1">
    <citation type="journal article" date="2001" name="Nature">
        <title>Complete genome sequence of a multiple drug resistant Salmonella enterica serovar Typhi CT18.</title>
        <authorList>
            <person name="Parkhill J."/>
            <person name="Dougan G."/>
            <person name="James K.D."/>
            <person name="Thomson N.R."/>
            <person name="Pickard D."/>
            <person name="Wain J."/>
            <person name="Churcher C.M."/>
            <person name="Mungall K.L."/>
            <person name="Bentley S.D."/>
            <person name="Holden M.T.G."/>
            <person name="Sebaihia M."/>
            <person name="Baker S."/>
            <person name="Basham D."/>
            <person name="Brooks K."/>
            <person name="Chillingworth T."/>
            <person name="Connerton P."/>
            <person name="Cronin A."/>
            <person name="Davis P."/>
            <person name="Davies R.M."/>
            <person name="Dowd L."/>
            <person name="White N."/>
            <person name="Farrar J."/>
            <person name="Feltwell T."/>
            <person name="Hamlin N."/>
            <person name="Haque A."/>
            <person name="Hien T.T."/>
            <person name="Holroyd S."/>
            <person name="Jagels K."/>
            <person name="Krogh A."/>
            <person name="Larsen T.S."/>
            <person name="Leather S."/>
            <person name="Moule S."/>
            <person name="O'Gaora P."/>
            <person name="Parry C."/>
            <person name="Quail M.A."/>
            <person name="Rutherford K.M."/>
            <person name="Simmonds M."/>
            <person name="Skelton J."/>
            <person name="Stevens K."/>
            <person name="Whitehead S."/>
            <person name="Barrell B.G."/>
        </authorList>
    </citation>
    <scope>NUCLEOTIDE SEQUENCE [LARGE SCALE GENOMIC DNA]</scope>
    <source>
        <strain>CT18</strain>
    </source>
</reference>
<reference key="2">
    <citation type="journal article" date="2003" name="J. Bacteriol.">
        <title>Comparative genomics of Salmonella enterica serovar Typhi strains Ty2 and CT18.</title>
        <authorList>
            <person name="Deng W."/>
            <person name="Liou S.-R."/>
            <person name="Plunkett G. III"/>
            <person name="Mayhew G.F."/>
            <person name="Rose D.J."/>
            <person name="Burland V."/>
            <person name="Kodoyianni V."/>
            <person name="Schwartz D.C."/>
            <person name="Blattner F.R."/>
        </authorList>
    </citation>
    <scope>NUCLEOTIDE SEQUENCE [LARGE SCALE GENOMIC DNA]</scope>
    <source>
        <strain>ATCC 700931 / Ty2</strain>
    </source>
</reference>
<gene>
    <name type="primary">rpmH</name>
    <name type="synonym">rimA</name>
    <name type="synonym">ssaF</name>
    <name type="ordered locus">STY3939.1</name>
    <name type="ordered locus">t3680</name>
    <name type="ORF">STY3939A</name>
</gene>